<keyword id="KW-0067">ATP-binding</keyword>
<keyword id="KW-0997">Cell inner membrane</keyword>
<keyword id="KW-1003">Cell membrane</keyword>
<keyword id="KW-0472">Membrane</keyword>
<keyword id="KW-0536">Nodulation</keyword>
<keyword id="KW-0547">Nucleotide-binding</keyword>
<keyword id="KW-0614">Plasmid</keyword>
<keyword id="KW-1185">Reference proteome</keyword>
<keyword id="KW-1278">Translocase</keyword>
<keyword id="KW-0813">Transport</keyword>
<feature type="chain" id="PRO_0000092643" description="Nod factor export ATP-binding protein I">
    <location>
        <begin position="1"/>
        <end position="343"/>
    </location>
</feature>
<feature type="domain" description="ABC transporter" evidence="1">
    <location>
        <begin position="45"/>
        <end position="275"/>
    </location>
</feature>
<feature type="region of interest" description="Disordered" evidence="2">
    <location>
        <begin position="1"/>
        <end position="38"/>
    </location>
</feature>
<feature type="compositionally biased region" description="Polar residues" evidence="2">
    <location>
        <begin position="1"/>
        <end position="14"/>
    </location>
</feature>
<feature type="binding site" evidence="1">
    <location>
        <begin position="77"/>
        <end position="84"/>
    </location>
    <ligand>
        <name>ATP</name>
        <dbReference type="ChEBI" id="CHEBI:30616"/>
    </ligand>
</feature>
<sequence>MQLLTRANVSSSPSRRPESNALKQKCHGHSNADNSLSRSKSDVAIELTNVSKSYGDKVVVDQLSFTITSGECFGLLGPNGAGKSTVSRLVLGLAPPDEGTITVLGEPVPARARLARSRIGVVPQFDTLDREFTARENLLVFGRYFGLHTRELEEAIPPLLDFARLESKADVPVAQLSGGMQRRLTLACALINDPQLLILDEPTTGLDPHARHLIWERLRSLLALGKTILLTTHFMEEADRLCDRLCVIEHGRKIVEGRPHALIDEQIGCDVIEIYGGNPRELTSVVGPYAQRVEVSGETLFCYSSDPEQVRLQLRGRTGLRLLQRPPNLEDVFLRLTGREMKD</sequence>
<organism>
    <name type="scientific">Sinorhizobium fredii (strain NBRC 101917 / NGR234)</name>
    <dbReference type="NCBI Taxonomy" id="394"/>
    <lineage>
        <taxon>Bacteria</taxon>
        <taxon>Pseudomonadati</taxon>
        <taxon>Pseudomonadota</taxon>
        <taxon>Alphaproteobacteria</taxon>
        <taxon>Hyphomicrobiales</taxon>
        <taxon>Rhizobiaceae</taxon>
        <taxon>Sinorhizobium/Ensifer group</taxon>
        <taxon>Sinorhizobium</taxon>
    </lineage>
</organism>
<evidence type="ECO:0000255" key="1">
    <source>
        <dbReference type="HAMAP-Rule" id="MF_01704"/>
    </source>
</evidence>
<evidence type="ECO:0000256" key="2">
    <source>
        <dbReference type="SAM" id="MobiDB-lite"/>
    </source>
</evidence>
<dbReference type="EC" id="7.6.2.-" evidence="1"/>
<dbReference type="EMBL" id="U00090">
    <property type="protein sequence ID" value="AAB91694.1"/>
    <property type="molecule type" value="Genomic_DNA"/>
</dbReference>
<dbReference type="RefSeq" id="NP_443882.1">
    <property type="nucleotide sequence ID" value="NC_000914.2"/>
</dbReference>
<dbReference type="RefSeq" id="WP_010875358.1">
    <property type="nucleotide sequence ID" value="NC_000914.2"/>
</dbReference>
<dbReference type="SMR" id="P55476"/>
<dbReference type="KEGG" id="rhi:NGR_a03440"/>
<dbReference type="PATRIC" id="fig|394.7.peg.353"/>
<dbReference type="eggNOG" id="COG1131">
    <property type="taxonomic scope" value="Bacteria"/>
</dbReference>
<dbReference type="HOGENOM" id="CLU_000604_1_2_5"/>
<dbReference type="OrthoDB" id="9778547at2"/>
<dbReference type="Proteomes" id="UP000001054">
    <property type="component" value="Plasmid pNGR234a"/>
</dbReference>
<dbReference type="GO" id="GO:0005886">
    <property type="term" value="C:plasma membrane"/>
    <property type="evidence" value="ECO:0007669"/>
    <property type="project" value="UniProtKB-SubCell"/>
</dbReference>
<dbReference type="GO" id="GO:0005524">
    <property type="term" value="F:ATP binding"/>
    <property type="evidence" value="ECO:0007669"/>
    <property type="project" value="UniProtKB-KW"/>
</dbReference>
<dbReference type="GO" id="GO:0016887">
    <property type="term" value="F:ATP hydrolysis activity"/>
    <property type="evidence" value="ECO:0007669"/>
    <property type="project" value="InterPro"/>
</dbReference>
<dbReference type="GO" id="GO:0022857">
    <property type="term" value="F:transmembrane transporter activity"/>
    <property type="evidence" value="ECO:0007669"/>
    <property type="project" value="InterPro"/>
</dbReference>
<dbReference type="FunFam" id="3.40.50.300:FF:000589">
    <property type="entry name" value="ABC transporter, ATP-binding subunit"/>
    <property type="match status" value="1"/>
</dbReference>
<dbReference type="Gene3D" id="3.40.50.300">
    <property type="entry name" value="P-loop containing nucleotide triphosphate hydrolases"/>
    <property type="match status" value="1"/>
</dbReference>
<dbReference type="InterPro" id="IPR003593">
    <property type="entry name" value="AAA+_ATPase"/>
</dbReference>
<dbReference type="InterPro" id="IPR003439">
    <property type="entry name" value="ABC_transporter-like_ATP-bd"/>
</dbReference>
<dbReference type="InterPro" id="IPR017871">
    <property type="entry name" value="ABC_transporter-like_CS"/>
</dbReference>
<dbReference type="InterPro" id="IPR050763">
    <property type="entry name" value="ABC_transporter_ATP-binding"/>
</dbReference>
<dbReference type="InterPro" id="IPR005978">
    <property type="entry name" value="ABC_transptNodI"/>
</dbReference>
<dbReference type="InterPro" id="IPR027417">
    <property type="entry name" value="P-loop_NTPase"/>
</dbReference>
<dbReference type="NCBIfam" id="TIGR01288">
    <property type="entry name" value="nodI"/>
    <property type="match status" value="1"/>
</dbReference>
<dbReference type="NCBIfam" id="NF010059">
    <property type="entry name" value="PRK13536.1"/>
    <property type="match status" value="1"/>
</dbReference>
<dbReference type="PANTHER" id="PTHR42711">
    <property type="entry name" value="ABC TRANSPORTER ATP-BINDING PROTEIN"/>
    <property type="match status" value="1"/>
</dbReference>
<dbReference type="PANTHER" id="PTHR42711:SF5">
    <property type="entry name" value="ABC TRANSPORTER ATP-BINDING PROTEIN NATA"/>
    <property type="match status" value="1"/>
</dbReference>
<dbReference type="Pfam" id="PF00005">
    <property type="entry name" value="ABC_tran"/>
    <property type="match status" value="1"/>
</dbReference>
<dbReference type="SMART" id="SM00382">
    <property type="entry name" value="AAA"/>
    <property type="match status" value="1"/>
</dbReference>
<dbReference type="SUPFAM" id="SSF52540">
    <property type="entry name" value="P-loop containing nucleoside triphosphate hydrolases"/>
    <property type="match status" value="1"/>
</dbReference>
<dbReference type="PROSITE" id="PS00211">
    <property type="entry name" value="ABC_TRANSPORTER_1"/>
    <property type="match status" value="1"/>
</dbReference>
<dbReference type="PROSITE" id="PS50893">
    <property type="entry name" value="ABC_TRANSPORTER_2"/>
    <property type="match status" value="1"/>
</dbReference>
<dbReference type="PROSITE" id="PS51240">
    <property type="entry name" value="NODI"/>
    <property type="match status" value="1"/>
</dbReference>
<protein>
    <recommendedName>
        <fullName evidence="1">Nod factor export ATP-binding protein I</fullName>
        <ecNumber evidence="1">7.6.2.-</ecNumber>
    </recommendedName>
    <alternativeName>
        <fullName evidence="1">Nodulation ATP-binding protein I</fullName>
    </alternativeName>
</protein>
<geneLocation type="plasmid">
    <name>sym pNGR234a</name>
</geneLocation>
<proteinExistence type="inferred from homology"/>
<reference key="1">
    <citation type="journal article" date="1997" name="Nature">
        <title>Molecular basis of symbiosis between Rhizobium and legumes.</title>
        <authorList>
            <person name="Freiberg C.A."/>
            <person name="Fellay R."/>
            <person name="Bairoch A."/>
            <person name="Broughton W.J."/>
            <person name="Rosenthal A."/>
            <person name="Perret X."/>
        </authorList>
    </citation>
    <scope>NUCLEOTIDE SEQUENCE [LARGE SCALE GENOMIC DNA]</scope>
    <source>
        <strain>NBRC 101917 / NGR234</strain>
    </source>
</reference>
<reference key="2">
    <citation type="journal article" date="2009" name="Appl. Environ. Microbiol.">
        <title>Rhizobium sp. strain NGR234 possesses a remarkable number of secretion systems.</title>
        <authorList>
            <person name="Schmeisser C."/>
            <person name="Liesegang H."/>
            <person name="Krysciak D."/>
            <person name="Bakkou N."/>
            <person name="Le Quere A."/>
            <person name="Wollherr A."/>
            <person name="Heinemeyer I."/>
            <person name="Morgenstern B."/>
            <person name="Pommerening-Roeser A."/>
            <person name="Flores M."/>
            <person name="Palacios R."/>
            <person name="Brenner S."/>
            <person name="Gottschalk G."/>
            <person name="Schmitz R.A."/>
            <person name="Broughton W.J."/>
            <person name="Perret X."/>
            <person name="Strittmatter A.W."/>
            <person name="Streit W.R."/>
        </authorList>
    </citation>
    <scope>NUCLEOTIDE SEQUENCE [LARGE SCALE GENOMIC DNA]</scope>
    <source>
        <strain>NBRC 101917 / NGR234</strain>
    </source>
</reference>
<name>NODI_SINFN</name>
<accession>P55476</accession>
<comment type="function">
    <text evidence="1">Part of the ABC transporter complex NodIJ involved in the export of the nodulation factors (Nod factors), the bacterial signal molecules that induce symbiosis and subsequent nodulation induction. Nod factors are LCO (lipo-chitin oligosaccharide), a modified beta-1,4-linked N-acetylglucosamine oligosaccharide. This subunit is responsible for energy coupling to the transport system.</text>
</comment>
<comment type="subunit">
    <text evidence="1">The complex is composed of two ATP-binding proteins (NodI) and two transmembrane proteins (NodJ).</text>
</comment>
<comment type="subcellular location">
    <subcellularLocation>
        <location evidence="1">Cell inner membrane</location>
        <topology evidence="1">Peripheral membrane protein</topology>
    </subcellularLocation>
</comment>
<comment type="similarity">
    <text evidence="1">Belongs to the ABC transporter superfamily. Lipooligosaccharide exporter (TC 3.A.1.102) family.</text>
</comment>
<gene>
    <name evidence="1" type="primary">nodI</name>
    <name type="ordered locus">NGR_a03440</name>
    <name type="ORF">y4hF</name>
</gene>